<comment type="function">
    <text>Component of the core of the flagella.</text>
</comment>
<comment type="subunit">
    <text>The flagellum consists of an outer layer composed of repeating units of FlaA around a core that contains several antigenically related polypeptides.</text>
</comment>
<comment type="subcellular location">
    <subcellularLocation>
        <location>Periplasmic flagellum</location>
    </subcellularLocation>
    <subcellularLocation>
        <location>Periplasm</location>
    </subcellularLocation>
</comment>
<comment type="similarity">
    <text evidence="1">Belongs to the bacterial flagellin family.</text>
</comment>
<dbReference type="PIR" id="G32351">
    <property type="entry name" value="G32351"/>
</dbReference>
<dbReference type="SMR" id="P21988"/>
<dbReference type="GO" id="GO:0055040">
    <property type="term" value="C:periplasmic flagellum"/>
    <property type="evidence" value="ECO:0007669"/>
    <property type="project" value="UniProtKB-SubCell"/>
</dbReference>
<reference key="1">
    <citation type="journal article" date="1988" name="J. Bacteriol.">
        <title>Antigenic relatedness and N-terminal sequence homology define two classes of periplasmic flagellar proteins of Treponema pallidum subsp. pallidum and Treponema phagedenis.</title>
        <authorList>
            <person name="Norris S.J."/>
            <person name="Charon N.W."/>
            <person name="Cook R.G."/>
            <person name="Fuentes M.D."/>
            <person name="Limberger R.J."/>
        </authorList>
    </citation>
    <scope>PROTEIN SEQUENCE</scope>
</reference>
<name>FLA1_TREPH</name>
<accession>P21988</accession>
<feature type="chain" id="PRO_0000182632" description="Flagellar filament 34 kDa core protein">
    <location>
        <begin position="1"/>
        <end position="28" status="greater than"/>
    </location>
</feature>
<feature type="non-terminal residue">
    <location>
        <position position="28"/>
    </location>
</feature>
<protein>
    <recommendedName>
        <fullName>Flagellar filament 34 kDa core protein</fullName>
    </recommendedName>
    <alternativeName>
        <fullName>Class B</fullName>
    </alternativeName>
</protein>
<evidence type="ECO:0000305" key="1"/>
<sequence>MIINHNMSAMFAQRTLGVTNNAIGKDME</sequence>
<proteinExistence type="evidence at protein level"/>
<organism>
    <name type="scientific">Treponema phagedenis</name>
    <dbReference type="NCBI Taxonomy" id="162"/>
    <lineage>
        <taxon>Bacteria</taxon>
        <taxon>Pseudomonadati</taxon>
        <taxon>Spirochaetota</taxon>
        <taxon>Spirochaetia</taxon>
        <taxon>Spirochaetales</taxon>
        <taxon>Treponemataceae</taxon>
        <taxon>Treponema</taxon>
    </lineage>
</organism>
<keyword id="KW-0975">Bacterial flagellum</keyword>
<keyword id="KW-0903">Direct protein sequencing</keyword>
<keyword id="KW-0574">Periplasm</keyword>